<feature type="chain" id="PRO_1000055683" description="Large ribosomal subunit protein uL14">
    <location>
        <begin position="1"/>
        <end position="144"/>
    </location>
</feature>
<keyword id="KW-0687">Ribonucleoprotein</keyword>
<keyword id="KW-0689">Ribosomal protein</keyword>
<keyword id="KW-0694">RNA-binding</keyword>
<keyword id="KW-0699">rRNA-binding</keyword>
<proteinExistence type="inferred from homology"/>
<sequence>MAKRGGKRTVGVSYRFHVTPGIFLNSLVPVADNSGARLVRVIGVVGHYSKTVHRRIPGAGVGDMVVVVVREGKPELRKQIFRAIVVRQRRPYRRPDGTWVAFEDNAVVIVTPEGDPKGSEIHGPVAMEATLRWPTIANLASIIV</sequence>
<name>RL14_PYRIL</name>
<organism>
    <name type="scientific">Pyrobaculum islandicum (strain DSM 4184 / JCM 9189 / GEO3)</name>
    <dbReference type="NCBI Taxonomy" id="384616"/>
    <lineage>
        <taxon>Archaea</taxon>
        <taxon>Thermoproteota</taxon>
        <taxon>Thermoprotei</taxon>
        <taxon>Thermoproteales</taxon>
        <taxon>Thermoproteaceae</taxon>
        <taxon>Pyrobaculum</taxon>
    </lineage>
</organism>
<gene>
    <name evidence="1" type="primary">rpl14</name>
    <name type="ordered locus">Pisl_0513</name>
</gene>
<accession>A1RRV9</accession>
<protein>
    <recommendedName>
        <fullName evidence="1">Large ribosomal subunit protein uL14</fullName>
    </recommendedName>
    <alternativeName>
        <fullName evidence="2">50S ribosomal protein L14</fullName>
    </alternativeName>
</protein>
<reference key="1">
    <citation type="submission" date="2006-12" db="EMBL/GenBank/DDBJ databases">
        <title>Complete sequence of Pyrobaculum islandicum DSM 4184.</title>
        <authorList>
            <person name="Copeland A."/>
            <person name="Lucas S."/>
            <person name="Lapidus A."/>
            <person name="Barry K."/>
            <person name="Detter J.C."/>
            <person name="Glavina del Rio T."/>
            <person name="Dalin E."/>
            <person name="Tice H."/>
            <person name="Pitluck S."/>
            <person name="Meincke L."/>
            <person name="Brettin T."/>
            <person name="Bruce D."/>
            <person name="Han C."/>
            <person name="Tapia R."/>
            <person name="Gilna P."/>
            <person name="Schmutz J."/>
            <person name="Larimer F."/>
            <person name="Land M."/>
            <person name="Hauser L."/>
            <person name="Kyrpides N."/>
            <person name="Mikhailova N."/>
            <person name="Cozen A.E."/>
            <person name="Fitz-Gibbon S.T."/>
            <person name="House C.H."/>
            <person name="Saltikov C."/>
            <person name="Lowe T."/>
            <person name="Richardson P."/>
        </authorList>
    </citation>
    <scope>NUCLEOTIDE SEQUENCE [LARGE SCALE GENOMIC DNA]</scope>
    <source>
        <strain>DSM 4184 / JCM 9189 / GEO3</strain>
    </source>
</reference>
<evidence type="ECO:0000255" key="1">
    <source>
        <dbReference type="HAMAP-Rule" id="MF_01367"/>
    </source>
</evidence>
<evidence type="ECO:0000305" key="2"/>
<comment type="function">
    <text evidence="1">Binds to 23S rRNA. Forms part of two intersubunit bridges in the 70S ribosome.</text>
</comment>
<comment type="subunit">
    <text evidence="1">Part of the 50S ribosomal subunit. Forms a cluster with proteins L3 and L24e, part of which may contact the 16S rRNA in 2 intersubunit bridges.</text>
</comment>
<comment type="similarity">
    <text evidence="1">Belongs to the universal ribosomal protein uL14 family.</text>
</comment>
<dbReference type="EMBL" id="CP000504">
    <property type="protein sequence ID" value="ABL87691.1"/>
    <property type="molecule type" value="Genomic_DNA"/>
</dbReference>
<dbReference type="RefSeq" id="WP_011762268.1">
    <property type="nucleotide sequence ID" value="NC_008701.1"/>
</dbReference>
<dbReference type="SMR" id="A1RRV9"/>
<dbReference type="STRING" id="384616.Pisl_0513"/>
<dbReference type="GeneID" id="4616463"/>
<dbReference type="KEGG" id="pis:Pisl_0513"/>
<dbReference type="eggNOG" id="arCOG04095">
    <property type="taxonomic scope" value="Archaea"/>
</dbReference>
<dbReference type="HOGENOM" id="CLU_095071_3_0_2"/>
<dbReference type="OrthoDB" id="23569at2157"/>
<dbReference type="Proteomes" id="UP000002595">
    <property type="component" value="Chromosome"/>
</dbReference>
<dbReference type="GO" id="GO:0022625">
    <property type="term" value="C:cytosolic large ribosomal subunit"/>
    <property type="evidence" value="ECO:0007669"/>
    <property type="project" value="TreeGrafter"/>
</dbReference>
<dbReference type="GO" id="GO:0070180">
    <property type="term" value="F:large ribosomal subunit rRNA binding"/>
    <property type="evidence" value="ECO:0007669"/>
    <property type="project" value="TreeGrafter"/>
</dbReference>
<dbReference type="GO" id="GO:0003735">
    <property type="term" value="F:structural constituent of ribosome"/>
    <property type="evidence" value="ECO:0007669"/>
    <property type="project" value="InterPro"/>
</dbReference>
<dbReference type="GO" id="GO:0006412">
    <property type="term" value="P:translation"/>
    <property type="evidence" value="ECO:0007669"/>
    <property type="project" value="UniProtKB-UniRule"/>
</dbReference>
<dbReference type="CDD" id="cd00337">
    <property type="entry name" value="Ribosomal_uL14"/>
    <property type="match status" value="1"/>
</dbReference>
<dbReference type="FunFam" id="2.40.150.20:FF:000007">
    <property type="entry name" value="50S ribosomal protein L14"/>
    <property type="match status" value="1"/>
</dbReference>
<dbReference type="Gene3D" id="2.40.150.20">
    <property type="entry name" value="Ribosomal protein L14"/>
    <property type="match status" value="1"/>
</dbReference>
<dbReference type="HAMAP" id="MF_01367">
    <property type="entry name" value="Ribosomal_uL14"/>
    <property type="match status" value="1"/>
</dbReference>
<dbReference type="InterPro" id="IPR000218">
    <property type="entry name" value="Ribosomal_uL14"/>
</dbReference>
<dbReference type="InterPro" id="IPR019971">
    <property type="entry name" value="Ribosomal_uL14_arc"/>
</dbReference>
<dbReference type="InterPro" id="IPR019972">
    <property type="entry name" value="Ribosomal_uL14_CS"/>
</dbReference>
<dbReference type="InterPro" id="IPR036853">
    <property type="entry name" value="Ribosomal_uL14_sf"/>
</dbReference>
<dbReference type="NCBIfam" id="NF006344">
    <property type="entry name" value="PRK08571.1"/>
    <property type="match status" value="1"/>
</dbReference>
<dbReference type="NCBIfam" id="TIGR03673">
    <property type="entry name" value="uL14_arch"/>
    <property type="match status" value="1"/>
</dbReference>
<dbReference type="PANTHER" id="PTHR11761">
    <property type="entry name" value="50S/60S RIBOSOMAL PROTEIN L14/L23"/>
    <property type="match status" value="1"/>
</dbReference>
<dbReference type="PANTHER" id="PTHR11761:SF8">
    <property type="entry name" value="LARGE RIBOSOMAL SUBUNIT PROTEIN UL14"/>
    <property type="match status" value="1"/>
</dbReference>
<dbReference type="Pfam" id="PF00238">
    <property type="entry name" value="Ribosomal_L14"/>
    <property type="match status" value="1"/>
</dbReference>
<dbReference type="SMART" id="SM01374">
    <property type="entry name" value="Ribosomal_L14"/>
    <property type="match status" value="1"/>
</dbReference>
<dbReference type="SUPFAM" id="SSF50193">
    <property type="entry name" value="Ribosomal protein L14"/>
    <property type="match status" value="1"/>
</dbReference>
<dbReference type="PROSITE" id="PS00049">
    <property type="entry name" value="RIBOSOMAL_L14"/>
    <property type="match status" value="1"/>
</dbReference>